<protein>
    <recommendedName>
        <fullName evidence="1">Phosphoglucosamine mutase</fullName>
        <ecNumber evidence="1">5.4.2.10</ecNumber>
    </recommendedName>
</protein>
<proteinExistence type="inferred from homology"/>
<gene>
    <name evidence="1" type="primary">glmM</name>
    <name type="ordered locus">HAPS_1045</name>
</gene>
<keyword id="KW-0413">Isomerase</keyword>
<keyword id="KW-0460">Magnesium</keyword>
<keyword id="KW-0479">Metal-binding</keyword>
<keyword id="KW-0597">Phosphoprotein</keyword>
<keyword id="KW-1185">Reference proteome</keyword>
<feature type="chain" id="PRO_1000185370" description="Phosphoglucosamine mutase">
    <location>
        <begin position="1"/>
        <end position="444"/>
    </location>
</feature>
<feature type="active site" description="Phosphoserine intermediate" evidence="1">
    <location>
        <position position="102"/>
    </location>
</feature>
<feature type="binding site" description="via phosphate group" evidence="1">
    <location>
        <position position="102"/>
    </location>
    <ligand>
        <name>Mg(2+)</name>
        <dbReference type="ChEBI" id="CHEBI:18420"/>
    </ligand>
</feature>
<feature type="binding site" evidence="1">
    <location>
        <position position="241"/>
    </location>
    <ligand>
        <name>Mg(2+)</name>
        <dbReference type="ChEBI" id="CHEBI:18420"/>
    </ligand>
</feature>
<feature type="binding site" evidence="1">
    <location>
        <position position="243"/>
    </location>
    <ligand>
        <name>Mg(2+)</name>
        <dbReference type="ChEBI" id="CHEBI:18420"/>
    </ligand>
</feature>
<feature type="binding site" evidence="1">
    <location>
        <position position="245"/>
    </location>
    <ligand>
        <name>Mg(2+)</name>
        <dbReference type="ChEBI" id="CHEBI:18420"/>
    </ligand>
</feature>
<feature type="modified residue" description="Phosphoserine" evidence="1">
    <location>
        <position position="102"/>
    </location>
</feature>
<sequence>MAERKYFGTDGVRGKVGQFPITPDFALKLGWAAGKVLATQGSKQVLIGKDTRISGYMLESALEAGLAAAGLSAAFTGPMPTPAIAYLTRTFRAEAGIVISASHNPYDDNGIKFFSAIGEKLPDEVEEAIEAMLDQPMDCVESAELGRASRINDAAGRYIEFCKSTFPSHLSLDGYKIVVDCANGATYHIAPNVMRELGAEVIEIGTHPNGLNINEKCGATDIKALQQVVVEAGADVGLAYDGDGDRLIMVDHLGNKVDGDQILFIIAREALCSGKLHGGVVGTLMSNMSLELALKELAIPFARANVGDRYVLEVLKEKGWKLGGENSGHIIVLDKNTTGDGIVASLEVLAAMASHKLSLNDLAKAVPLFPQVLINVRFAGGANPLDSEDVKAVAKAVEQRLAGKGRILLRKSGTEPLIRVMVECEDGALAQSCAEEISEAVKRN</sequence>
<evidence type="ECO:0000255" key="1">
    <source>
        <dbReference type="HAMAP-Rule" id="MF_01554"/>
    </source>
</evidence>
<comment type="function">
    <text evidence="1">Catalyzes the conversion of glucosamine-6-phosphate to glucosamine-1-phosphate.</text>
</comment>
<comment type="catalytic activity">
    <reaction evidence="1">
        <text>alpha-D-glucosamine 1-phosphate = D-glucosamine 6-phosphate</text>
        <dbReference type="Rhea" id="RHEA:23424"/>
        <dbReference type="ChEBI" id="CHEBI:58516"/>
        <dbReference type="ChEBI" id="CHEBI:58725"/>
        <dbReference type="EC" id="5.4.2.10"/>
    </reaction>
</comment>
<comment type="cofactor">
    <cofactor evidence="1">
        <name>Mg(2+)</name>
        <dbReference type="ChEBI" id="CHEBI:18420"/>
    </cofactor>
    <text evidence="1">Binds 1 Mg(2+) ion per subunit.</text>
</comment>
<comment type="PTM">
    <text evidence="1">Activated by phosphorylation.</text>
</comment>
<comment type="similarity">
    <text evidence="1">Belongs to the phosphohexose mutase family.</text>
</comment>
<reference key="1">
    <citation type="journal article" date="2009" name="J. Bacteriol.">
        <title>Complete genome sequence of Haemophilus parasuis SH0165.</title>
        <authorList>
            <person name="Yue M."/>
            <person name="Yang F."/>
            <person name="Yang J."/>
            <person name="Bei W."/>
            <person name="Cai X."/>
            <person name="Chen L."/>
            <person name="Dong J."/>
            <person name="Zhou R."/>
            <person name="Jin M."/>
            <person name="Jin Q."/>
            <person name="Chen H."/>
        </authorList>
    </citation>
    <scope>NUCLEOTIDE SEQUENCE [LARGE SCALE GENOMIC DNA]</scope>
    <source>
        <strain>SH0165</strain>
    </source>
</reference>
<organism>
    <name type="scientific">Glaesserella parasuis serovar 5 (strain SH0165)</name>
    <name type="common">Haemophilus parasuis</name>
    <dbReference type="NCBI Taxonomy" id="557723"/>
    <lineage>
        <taxon>Bacteria</taxon>
        <taxon>Pseudomonadati</taxon>
        <taxon>Pseudomonadota</taxon>
        <taxon>Gammaproteobacteria</taxon>
        <taxon>Pasteurellales</taxon>
        <taxon>Pasteurellaceae</taxon>
        <taxon>Glaesserella</taxon>
    </lineage>
</organism>
<dbReference type="EC" id="5.4.2.10" evidence="1"/>
<dbReference type="EMBL" id="CP001321">
    <property type="protein sequence ID" value="ACL32664.1"/>
    <property type="molecule type" value="Genomic_DNA"/>
</dbReference>
<dbReference type="RefSeq" id="WP_015939592.1">
    <property type="nucleotide sequence ID" value="NC_011852.1"/>
</dbReference>
<dbReference type="SMR" id="B8F5R2"/>
<dbReference type="STRING" id="557723.HAPS_1045"/>
<dbReference type="KEGG" id="hap:HAPS_1045"/>
<dbReference type="PATRIC" id="fig|557723.8.peg.1040"/>
<dbReference type="HOGENOM" id="CLU_016950_7_0_6"/>
<dbReference type="Proteomes" id="UP000006743">
    <property type="component" value="Chromosome"/>
</dbReference>
<dbReference type="GO" id="GO:0005829">
    <property type="term" value="C:cytosol"/>
    <property type="evidence" value="ECO:0007669"/>
    <property type="project" value="TreeGrafter"/>
</dbReference>
<dbReference type="GO" id="GO:0000287">
    <property type="term" value="F:magnesium ion binding"/>
    <property type="evidence" value="ECO:0007669"/>
    <property type="project" value="UniProtKB-UniRule"/>
</dbReference>
<dbReference type="GO" id="GO:0008966">
    <property type="term" value="F:phosphoglucosamine mutase activity"/>
    <property type="evidence" value="ECO:0007669"/>
    <property type="project" value="UniProtKB-UniRule"/>
</dbReference>
<dbReference type="GO" id="GO:0004615">
    <property type="term" value="F:phosphomannomutase activity"/>
    <property type="evidence" value="ECO:0007669"/>
    <property type="project" value="TreeGrafter"/>
</dbReference>
<dbReference type="GO" id="GO:0005975">
    <property type="term" value="P:carbohydrate metabolic process"/>
    <property type="evidence" value="ECO:0007669"/>
    <property type="project" value="InterPro"/>
</dbReference>
<dbReference type="GO" id="GO:0009252">
    <property type="term" value="P:peptidoglycan biosynthetic process"/>
    <property type="evidence" value="ECO:0007669"/>
    <property type="project" value="TreeGrafter"/>
</dbReference>
<dbReference type="GO" id="GO:0006048">
    <property type="term" value="P:UDP-N-acetylglucosamine biosynthetic process"/>
    <property type="evidence" value="ECO:0007669"/>
    <property type="project" value="TreeGrafter"/>
</dbReference>
<dbReference type="CDD" id="cd05802">
    <property type="entry name" value="GlmM"/>
    <property type="match status" value="1"/>
</dbReference>
<dbReference type="FunFam" id="3.30.310.50:FF:000001">
    <property type="entry name" value="Phosphoglucosamine mutase"/>
    <property type="match status" value="1"/>
</dbReference>
<dbReference type="FunFam" id="3.40.120.10:FF:000001">
    <property type="entry name" value="Phosphoglucosamine mutase"/>
    <property type="match status" value="1"/>
</dbReference>
<dbReference type="FunFam" id="3.40.120.10:FF:000003">
    <property type="entry name" value="Phosphoglucosamine mutase"/>
    <property type="match status" value="1"/>
</dbReference>
<dbReference type="Gene3D" id="3.40.120.10">
    <property type="entry name" value="Alpha-D-Glucose-1,6-Bisphosphate, subunit A, domain 3"/>
    <property type="match status" value="3"/>
</dbReference>
<dbReference type="Gene3D" id="3.30.310.50">
    <property type="entry name" value="Alpha-D-phosphohexomutase, C-terminal domain"/>
    <property type="match status" value="1"/>
</dbReference>
<dbReference type="HAMAP" id="MF_01554_B">
    <property type="entry name" value="GlmM_B"/>
    <property type="match status" value="1"/>
</dbReference>
<dbReference type="InterPro" id="IPR005844">
    <property type="entry name" value="A-D-PHexomutase_a/b/a-I"/>
</dbReference>
<dbReference type="InterPro" id="IPR016055">
    <property type="entry name" value="A-D-PHexomutase_a/b/a-I/II/III"/>
</dbReference>
<dbReference type="InterPro" id="IPR005845">
    <property type="entry name" value="A-D-PHexomutase_a/b/a-II"/>
</dbReference>
<dbReference type="InterPro" id="IPR005846">
    <property type="entry name" value="A-D-PHexomutase_a/b/a-III"/>
</dbReference>
<dbReference type="InterPro" id="IPR005843">
    <property type="entry name" value="A-D-PHexomutase_C"/>
</dbReference>
<dbReference type="InterPro" id="IPR036900">
    <property type="entry name" value="A-D-PHexomutase_C_sf"/>
</dbReference>
<dbReference type="InterPro" id="IPR016066">
    <property type="entry name" value="A-D-PHexomutase_CS"/>
</dbReference>
<dbReference type="InterPro" id="IPR005841">
    <property type="entry name" value="Alpha-D-phosphohexomutase_SF"/>
</dbReference>
<dbReference type="InterPro" id="IPR006352">
    <property type="entry name" value="GlmM_bact"/>
</dbReference>
<dbReference type="InterPro" id="IPR050060">
    <property type="entry name" value="Phosphoglucosamine_mutase"/>
</dbReference>
<dbReference type="NCBIfam" id="TIGR01455">
    <property type="entry name" value="glmM"/>
    <property type="match status" value="1"/>
</dbReference>
<dbReference type="NCBIfam" id="NF008139">
    <property type="entry name" value="PRK10887.1"/>
    <property type="match status" value="1"/>
</dbReference>
<dbReference type="PANTHER" id="PTHR42946:SF1">
    <property type="entry name" value="PHOSPHOGLUCOMUTASE (ALPHA-D-GLUCOSE-1,6-BISPHOSPHATE-DEPENDENT)"/>
    <property type="match status" value="1"/>
</dbReference>
<dbReference type="PANTHER" id="PTHR42946">
    <property type="entry name" value="PHOSPHOHEXOSE MUTASE"/>
    <property type="match status" value="1"/>
</dbReference>
<dbReference type="Pfam" id="PF02878">
    <property type="entry name" value="PGM_PMM_I"/>
    <property type="match status" value="1"/>
</dbReference>
<dbReference type="Pfam" id="PF02879">
    <property type="entry name" value="PGM_PMM_II"/>
    <property type="match status" value="1"/>
</dbReference>
<dbReference type="Pfam" id="PF02880">
    <property type="entry name" value="PGM_PMM_III"/>
    <property type="match status" value="1"/>
</dbReference>
<dbReference type="Pfam" id="PF00408">
    <property type="entry name" value="PGM_PMM_IV"/>
    <property type="match status" value="1"/>
</dbReference>
<dbReference type="PRINTS" id="PR00509">
    <property type="entry name" value="PGMPMM"/>
</dbReference>
<dbReference type="SUPFAM" id="SSF55957">
    <property type="entry name" value="Phosphoglucomutase, C-terminal domain"/>
    <property type="match status" value="1"/>
</dbReference>
<dbReference type="SUPFAM" id="SSF53738">
    <property type="entry name" value="Phosphoglucomutase, first 3 domains"/>
    <property type="match status" value="3"/>
</dbReference>
<dbReference type="PROSITE" id="PS00710">
    <property type="entry name" value="PGM_PMM"/>
    <property type="match status" value="1"/>
</dbReference>
<name>GLMM_GLAP5</name>
<accession>B8F5R2</accession>